<sequence>MIIYLHGFDSTSPGNHEKVLQLQFIDDDVRFINYSTLHPKHDMQHLLKEVSKVIDQANDPNPLICGVGLGAYWSERIGFLCGIKQVMFNPNLHPEKTMAGRIDRPEEYEDIATKCVRQFRTKNQERCLVILSKEDEIHDNSKTAAELDKHYQIIWDETQAHKFKKISHHLQAMKAFKNA</sequence>
<gene>
    <name type="ordered locus">VIBHAR_01524</name>
</gene>
<organism>
    <name type="scientific">Vibrio campbellii (strain ATCC BAA-1116)</name>
    <dbReference type="NCBI Taxonomy" id="2902295"/>
    <lineage>
        <taxon>Bacteria</taxon>
        <taxon>Pseudomonadati</taxon>
        <taxon>Pseudomonadota</taxon>
        <taxon>Gammaproteobacteria</taxon>
        <taxon>Vibrionales</taxon>
        <taxon>Vibrionaceae</taxon>
        <taxon>Vibrio</taxon>
    </lineage>
</organism>
<protein>
    <recommendedName>
        <fullName evidence="1">UPF0227 protein VIBHAR_01524</fullName>
    </recommendedName>
</protein>
<accession>A7MV27</accession>
<evidence type="ECO:0000255" key="1">
    <source>
        <dbReference type="HAMAP-Rule" id="MF_01047"/>
    </source>
</evidence>
<proteinExistence type="inferred from homology"/>
<dbReference type="EMBL" id="CP000789">
    <property type="protein sequence ID" value="ABU70494.1"/>
    <property type="molecule type" value="Genomic_DNA"/>
</dbReference>
<dbReference type="SMR" id="A7MV27"/>
<dbReference type="ESTHER" id="vibhb-y1524">
    <property type="family name" value="abh_upf00227"/>
</dbReference>
<dbReference type="KEGG" id="vha:VIBHAR_01524"/>
<dbReference type="PATRIC" id="fig|338187.25.peg.1137"/>
<dbReference type="Proteomes" id="UP000008152">
    <property type="component" value="Chromosome I"/>
</dbReference>
<dbReference type="Gene3D" id="3.40.50.1820">
    <property type="entry name" value="alpha/beta hydrolase"/>
    <property type="match status" value="1"/>
</dbReference>
<dbReference type="HAMAP" id="MF_01047">
    <property type="entry name" value="UPF0227"/>
    <property type="match status" value="1"/>
</dbReference>
<dbReference type="InterPro" id="IPR029058">
    <property type="entry name" value="AB_hydrolase_fold"/>
</dbReference>
<dbReference type="InterPro" id="IPR022987">
    <property type="entry name" value="UPF0227"/>
</dbReference>
<dbReference type="InterPro" id="IPR008886">
    <property type="entry name" value="UPF0227/Esterase_YqiA"/>
</dbReference>
<dbReference type="NCBIfam" id="NF003431">
    <property type="entry name" value="PRK04940.1"/>
    <property type="match status" value="1"/>
</dbReference>
<dbReference type="PANTHER" id="PTHR35602">
    <property type="entry name" value="ESTERASE YQIA-RELATED"/>
    <property type="match status" value="1"/>
</dbReference>
<dbReference type="PANTHER" id="PTHR35602:SF2">
    <property type="entry name" value="UPF0227 PROTEIN YCFP"/>
    <property type="match status" value="1"/>
</dbReference>
<dbReference type="Pfam" id="PF05728">
    <property type="entry name" value="UPF0227"/>
    <property type="match status" value="1"/>
</dbReference>
<dbReference type="SUPFAM" id="SSF53474">
    <property type="entry name" value="alpha/beta-Hydrolases"/>
    <property type="match status" value="1"/>
</dbReference>
<reference key="1">
    <citation type="submission" date="2007-08" db="EMBL/GenBank/DDBJ databases">
        <authorList>
            <consortium name="The Vibrio harveyi Genome Sequencing Project"/>
            <person name="Bassler B."/>
            <person name="Clifton S.W."/>
            <person name="Fulton L."/>
            <person name="Delehaunty K."/>
            <person name="Fronick C."/>
            <person name="Harrison M."/>
            <person name="Markivic C."/>
            <person name="Fulton R."/>
            <person name="Tin-Wollam A.-M."/>
            <person name="Shah N."/>
            <person name="Pepin K."/>
            <person name="Nash W."/>
            <person name="Thiruvilangam P."/>
            <person name="Bhonagiri V."/>
            <person name="Waters C."/>
            <person name="Tu K.C."/>
            <person name="Irgon J."/>
            <person name="Wilson R.K."/>
        </authorList>
    </citation>
    <scope>NUCLEOTIDE SEQUENCE [LARGE SCALE GENOMIC DNA]</scope>
    <source>
        <strain>ATCC BAA-1116 / BB120</strain>
    </source>
</reference>
<feature type="chain" id="PRO_1000064303" description="UPF0227 protein VIBHAR_01524">
    <location>
        <begin position="1"/>
        <end position="179"/>
    </location>
</feature>
<comment type="similarity">
    <text evidence="1">Belongs to the UPF0227 family.</text>
</comment>
<name>Y1524_VIBC1</name>